<comment type="function">
    <text evidence="1">Catalyzes the reversible conversion of 2-phosphoglycerate (2-PG) into phosphoenolpyruvate (PEP). It is essential for the degradation of carbohydrates via glycolysis.</text>
</comment>
<comment type="catalytic activity">
    <reaction evidence="1">
        <text>(2R)-2-phosphoglycerate = phosphoenolpyruvate + H2O</text>
        <dbReference type="Rhea" id="RHEA:10164"/>
        <dbReference type="ChEBI" id="CHEBI:15377"/>
        <dbReference type="ChEBI" id="CHEBI:58289"/>
        <dbReference type="ChEBI" id="CHEBI:58702"/>
        <dbReference type="EC" id="4.2.1.11"/>
    </reaction>
</comment>
<comment type="cofactor">
    <cofactor evidence="1">
        <name>Mg(2+)</name>
        <dbReference type="ChEBI" id="CHEBI:18420"/>
    </cofactor>
    <text evidence="1">Binds a second Mg(2+) ion via substrate during catalysis.</text>
</comment>
<comment type="pathway">
    <text evidence="1">Carbohydrate degradation; glycolysis; pyruvate from D-glyceraldehyde 3-phosphate: step 4/5.</text>
</comment>
<comment type="subcellular location">
    <subcellularLocation>
        <location evidence="1">Cytoplasm</location>
    </subcellularLocation>
    <subcellularLocation>
        <location evidence="1">Secreted</location>
    </subcellularLocation>
    <subcellularLocation>
        <location evidence="1">Cell surface</location>
    </subcellularLocation>
    <text evidence="1">Fractions of enolase are present in both the cytoplasm and on the cell surface.</text>
</comment>
<comment type="similarity">
    <text evidence="1">Belongs to the enolase family.</text>
</comment>
<proteinExistence type="inferred from homology"/>
<keyword id="KW-0963">Cytoplasm</keyword>
<keyword id="KW-0324">Glycolysis</keyword>
<keyword id="KW-0456">Lyase</keyword>
<keyword id="KW-0460">Magnesium</keyword>
<keyword id="KW-0479">Metal-binding</keyword>
<keyword id="KW-0964">Secreted</keyword>
<organism>
    <name type="scientific">Chlamydia caviae (strain ATCC VR-813 / DSM 19441 / 03DC25 / GPIC)</name>
    <name type="common">Chlamydophila caviae</name>
    <dbReference type="NCBI Taxonomy" id="227941"/>
    <lineage>
        <taxon>Bacteria</taxon>
        <taxon>Pseudomonadati</taxon>
        <taxon>Chlamydiota</taxon>
        <taxon>Chlamydiia</taxon>
        <taxon>Chlamydiales</taxon>
        <taxon>Chlamydiaceae</taxon>
        <taxon>Chlamydia/Chlamydophila group</taxon>
        <taxon>Chlamydia</taxon>
    </lineage>
</organism>
<feature type="chain" id="PRO_0000133865" description="Enolase">
    <location>
        <begin position="1"/>
        <end position="424"/>
    </location>
</feature>
<feature type="active site" description="Proton donor" evidence="1">
    <location>
        <position position="207"/>
    </location>
</feature>
<feature type="active site" description="Proton acceptor" evidence="1">
    <location>
        <position position="335"/>
    </location>
</feature>
<feature type="binding site" evidence="1">
    <location>
        <position position="165"/>
    </location>
    <ligand>
        <name>(2R)-2-phosphoglycerate</name>
        <dbReference type="ChEBI" id="CHEBI:58289"/>
    </ligand>
</feature>
<feature type="binding site" evidence="1">
    <location>
        <position position="244"/>
    </location>
    <ligand>
        <name>Mg(2+)</name>
        <dbReference type="ChEBI" id="CHEBI:18420"/>
    </ligand>
</feature>
<feature type="binding site" evidence="1">
    <location>
        <position position="283"/>
    </location>
    <ligand>
        <name>Mg(2+)</name>
        <dbReference type="ChEBI" id="CHEBI:18420"/>
    </ligand>
</feature>
<feature type="binding site" evidence="1">
    <location>
        <position position="310"/>
    </location>
    <ligand>
        <name>Mg(2+)</name>
        <dbReference type="ChEBI" id="CHEBI:18420"/>
    </ligand>
</feature>
<feature type="binding site" evidence="1">
    <location>
        <position position="335"/>
    </location>
    <ligand>
        <name>(2R)-2-phosphoglycerate</name>
        <dbReference type="ChEBI" id="CHEBI:58289"/>
    </ligand>
</feature>
<feature type="binding site" evidence="1">
    <location>
        <position position="364"/>
    </location>
    <ligand>
        <name>(2R)-2-phosphoglycerate</name>
        <dbReference type="ChEBI" id="CHEBI:58289"/>
    </ligand>
</feature>
<feature type="binding site" evidence="1">
    <location>
        <position position="365"/>
    </location>
    <ligand>
        <name>(2R)-2-phosphoglycerate</name>
        <dbReference type="ChEBI" id="CHEBI:58289"/>
    </ligand>
</feature>
<feature type="binding site" evidence="1">
    <location>
        <position position="386"/>
    </location>
    <ligand>
        <name>(2R)-2-phosphoglycerate</name>
        <dbReference type="ChEBI" id="CHEBI:58289"/>
    </ligand>
</feature>
<dbReference type="EC" id="4.2.1.11" evidence="1"/>
<dbReference type="EMBL" id="AE015925">
    <property type="protein sequence ID" value="AAP05702.1"/>
    <property type="molecule type" value="Genomic_DNA"/>
</dbReference>
<dbReference type="RefSeq" id="WP_011006915.1">
    <property type="nucleotide sequence ID" value="NC_003361.3"/>
</dbReference>
<dbReference type="SMR" id="Q821H7"/>
<dbReference type="STRING" id="227941.CCA_00963"/>
<dbReference type="KEGG" id="cca:CCA_00963"/>
<dbReference type="eggNOG" id="COG0148">
    <property type="taxonomic scope" value="Bacteria"/>
</dbReference>
<dbReference type="HOGENOM" id="CLU_031223_2_1_0"/>
<dbReference type="OrthoDB" id="9804716at2"/>
<dbReference type="UniPathway" id="UPA00109">
    <property type="reaction ID" value="UER00187"/>
</dbReference>
<dbReference type="Proteomes" id="UP000002193">
    <property type="component" value="Chromosome"/>
</dbReference>
<dbReference type="GO" id="GO:0009986">
    <property type="term" value="C:cell surface"/>
    <property type="evidence" value="ECO:0007669"/>
    <property type="project" value="UniProtKB-SubCell"/>
</dbReference>
<dbReference type="GO" id="GO:0005576">
    <property type="term" value="C:extracellular region"/>
    <property type="evidence" value="ECO:0007669"/>
    <property type="project" value="UniProtKB-SubCell"/>
</dbReference>
<dbReference type="GO" id="GO:0000015">
    <property type="term" value="C:phosphopyruvate hydratase complex"/>
    <property type="evidence" value="ECO:0007669"/>
    <property type="project" value="InterPro"/>
</dbReference>
<dbReference type="GO" id="GO:0000287">
    <property type="term" value="F:magnesium ion binding"/>
    <property type="evidence" value="ECO:0007669"/>
    <property type="project" value="UniProtKB-UniRule"/>
</dbReference>
<dbReference type="GO" id="GO:0004634">
    <property type="term" value="F:phosphopyruvate hydratase activity"/>
    <property type="evidence" value="ECO:0007669"/>
    <property type="project" value="UniProtKB-UniRule"/>
</dbReference>
<dbReference type="GO" id="GO:0006096">
    <property type="term" value="P:glycolytic process"/>
    <property type="evidence" value="ECO:0007669"/>
    <property type="project" value="UniProtKB-UniRule"/>
</dbReference>
<dbReference type="CDD" id="cd03313">
    <property type="entry name" value="enolase"/>
    <property type="match status" value="1"/>
</dbReference>
<dbReference type="FunFam" id="3.30.390.10:FF:000001">
    <property type="entry name" value="Enolase"/>
    <property type="match status" value="1"/>
</dbReference>
<dbReference type="Gene3D" id="3.20.20.120">
    <property type="entry name" value="Enolase-like C-terminal domain"/>
    <property type="match status" value="1"/>
</dbReference>
<dbReference type="Gene3D" id="3.30.390.10">
    <property type="entry name" value="Enolase-like, N-terminal domain"/>
    <property type="match status" value="1"/>
</dbReference>
<dbReference type="HAMAP" id="MF_00318">
    <property type="entry name" value="Enolase"/>
    <property type="match status" value="1"/>
</dbReference>
<dbReference type="InterPro" id="IPR000941">
    <property type="entry name" value="Enolase"/>
</dbReference>
<dbReference type="InterPro" id="IPR036849">
    <property type="entry name" value="Enolase-like_C_sf"/>
</dbReference>
<dbReference type="InterPro" id="IPR029017">
    <property type="entry name" value="Enolase-like_N"/>
</dbReference>
<dbReference type="InterPro" id="IPR020810">
    <property type="entry name" value="Enolase_C"/>
</dbReference>
<dbReference type="InterPro" id="IPR020809">
    <property type="entry name" value="Enolase_CS"/>
</dbReference>
<dbReference type="InterPro" id="IPR020811">
    <property type="entry name" value="Enolase_N"/>
</dbReference>
<dbReference type="NCBIfam" id="TIGR01060">
    <property type="entry name" value="eno"/>
    <property type="match status" value="1"/>
</dbReference>
<dbReference type="PANTHER" id="PTHR11902">
    <property type="entry name" value="ENOLASE"/>
    <property type="match status" value="1"/>
</dbReference>
<dbReference type="PANTHER" id="PTHR11902:SF1">
    <property type="entry name" value="ENOLASE"/>
    <property type="match status" value="1"/>
</dbReference>
<dbReference type="Pfam" id="PF00113">
    <property type="entry name" value="Enolase_C"/>
    <property type="match status" value="1"/>
</dbReference>
<dbReference type="Pfam" id="PF03952">
    <property type="entry name" value="Enolase_N"/>
    <property type="match status" value="1"/>
</dbReference>
<dbReference type="PIRSF" id="PIRSF001400">
    <property type="entry name" value="Enolase"/>
    <property type="match status" value="1"/>
</dbReference>
<dbReference type="PRINTS" id="PR00148">
    <property type="entry name" value="ENOLASE"/>
</dbReference>
<dbReference type="SFLD" id="SFLDF00002">
    <property type="entry name" value="enolase"/>
    <property type="match status" value="1"/>
</dbReference>
<dbReference type="SFLD" id="SFLDG00178">
    <property type="entry name" value="enolase"/>
    <property type="match status" value="1"/>
</dbReference>
<dbReference type="SMART" id="SM01192">
    <property type="entry name" value="Enolase_C"/>
    <property type="match status" value="1"/>
</dbReference>
<dbReference type="SMART" id="SM01193">
    <property type="entry name" value="Enolase_N"/>
    <property type="match status" value="1"/>
</dbReference>
<dbReference type="SUPFAM" id="SSF51604">
    <property type="entry name" value="Enolase C-terminal domain-like"/>
    <property type="match status" value="1"/>
</dbReference>
<dbReference type="SUPFAM" id="SSF54826">
    <property type="entry name" value="Enolase N-terminal domain-like"/>
    <property type="match status" value="1"/>
</dbReference>
<dbReference type="PROSITE" id="PS00164">
    <property type="entry name" value="ENOLASE"/>
    <property type="match status" value="1"/>
</dbReference>
<name>ENO_CHLCV</name>
<gene>
    <name evidence="1" type="primary">eno</name>
    <name type="ordered locus">CCA_00963</name>
</gene>
<sequence>MLEVVISDIQAREILDSRGYPTLYVKVTTDAGTFGEACVPSGASTGIKEALELRDQDSSRFQGKGVLQAVKNVKEVLLPVLQGISIFDQILIDSIMVEADGTPNKEKLGANAILGVSLASAKAAAATLGRSFYRYLGGCFAHVLPCPMMNLINGGMHANNGLQFQEFMIRPIGATSLKEAVRMGADVFHSLKNILNEKNLATGVGDEGGFAPQLKSNSEALDLLVLAIEKAGFQPGEDISLALDCAASSFYDTKAETYDGKSYEEQVNILADLCDRYPIDSIEDGLAEEDFDGWELLTAELGESIQIVGDDLFVTNPELIADGISRGLANAVLIKPNQIGTLTETSEAIQLAHSQGYTTILSHRSGETEDTTIADLAVAFNTGQIKTGSLSRSERIAKYNRLMAIEEELGPEGLFKDSNPFSGE</sequence>
<evidence type="ECO:0000255" key="1">
    <source>
        <dbReference type="HAMAP-Rule" id="MF_00318"/>
    </source>
</evidence>
<accession>Q821H7</accession>
<reference key="1">
    <citation type="journal article" date="2003" name="Nucleic Acids Res.">
        <title>Genome sequence of Chlamydophila caviae (Chlamydia psittaci GPIC): examining the role of niche-specific genes in the evolution of the Chlamydiaceae.</title>
        <authorList>
            <person name="Read T.D."/>
            <person name="Myers G.S.A."/>
            <person name="Brunham R.C."/>
            <person name="Nelson W.C."/>
            <person name="Paulsen I.T."/>
            <person name="Heidelberg J.F."/>
            <person name="Holtzapple E.K."/>
            <person name="Khouri H.M."/>
            <person name="Federova N.B."/>
            <person name="Carty H.A."/>
            <person name="Umayam L.A."/>
            <person name="Haft D.H."/>
            <person name="Peterson J.D."/>
            <person name="Beanan M.J."/>
            <person name="White O."/>
            <person name="Salzberg S.L."/>
            <person name="Hsia R.-C."/>
            <person name="McClarty G."/>
            <person name="Rank R.G."/>
            <person name="Bavoil P.M."/>
            <person name="Fraser C.M."/>
        </authorList>
    </citation>
    <scope>NUCLEOTIDE SEQUENCE [LARGE SCALE GENOMIC DNA]</scope>
    <source>
        <strain>ATCC VR-813 / DSM 19441 / 03DC25 / GPIC</strain>
    </source>
</reference>
<protein>
    <recommendedName>
        <fullName evidence="1">Enolase</fullName>
        <ecNumber evidence="1">4.2.1.11</ecNumber>
    </recommendedName>
    <alternativeName>
        <fullName evidence="1">2-phospho-D-glycerate hydro-lyase</fullName>
    </alternativeName>
    <alternativeName>
        <fullName evidence="1">2-phosphoglycerate dehydratase</fullName>
    </alternativeName>
</protein>